<reference key="1">
    <citation type="journal article" date="2006" name="Proc. Natl. Acad. Sci. U.S.A.">
        <title>Comparative genomics of the lactic acid bacteria.</title>
        <authorList>
            <person name="Makarova K.S."/>
            <person name="Slesarev A."/>
            <person name="Wolf Y.I."/>
            <person name="Sorokin A."/>
            <person name="Mirkin B."/>
            <person name="Koonin E.V."/>
            <person name="Pavlov A."/>
            <person name="Pavlova N."/>
            <person name="Karamychev V."/>
            <person name="Polouchine N."/>
            <person name="Shakhova V."/>
            <person name="Grigoriev I."/>
            <person name="Lou Y."/>
            <person name="Rohksar D."/>
            <person name="Lucas S."/>
            <person name="Huang K."/>
            <person name="Goodstein D.M."/>
            <person name="Hawkins T."/>
            <person name="Plengvidhya V."/>
            <person name="Welker D."/>
            <person name="Hughes J."/>
            <person name="Goh Y."/>
            <person name="Benson A."/>
            <person name="Baldwin K."/>
            <person name="Lee J.-H."/>
            <person name="Diaz-Muniz I."/>
            <person name="Dosti B."/>
            <person name="Smeianov V."/>
            <person name="Wechter W."/>
            <person name="Barabote R."/>
            <person name="Lorca G."/>
            <person name="Altermann E."/>
            <person name="Barrangou R."/>
            <person name="Ganesan B."/>
            <person name="Xie Y."/>
            <person name="Rawsthorne H."/>
            <person name="Tamir D."/>
            <person name="Parker C."/>
            <person name="Breidt F."/>
            <person name="Broadbent J.R."/>
            <person name="Hutkins R."/>
            <person name="O'Sullivan D."/>
            <person name="Steele J."/>
            <person name="Unlu G."/>
            <person name="Saier M.H. Jr."/>
            <person name="Klaenhammer T."/>
            <person name="Richardson P."/>
            <person name="Kozyavkin S."/>
            <person name="Weimer B.C."/>
            <person name="Mills D.A."/>
        </authorList>
    </citation>
    <scope>NUCLEOTIDE SEQUENCE [LARGE SCALE GENOMIC DNA]</scope>
    <source>
        <strain>ATCC 8293 / DSM 20343 / BCRC 11652 / CCM 1803 / JCM 6124 / NCDO 523 / NBRC 100496 / NCIMB 8023 / NCTC 12954 / NRRL B-1118 / 37Y</strain>
    </source>
</reference>
<comment type="function">
    <text evidence="1">Catalyzes the phosphorylation of the hydroxyl group of 4-methyl-5-beta-hydroxyethylthiazole (THZ).</text>
</comment>
<comment type="catalytic activity">
    <reaction evidence="1">
        <text>5-(2-hydroxyethyl)-4-methylthiazole + ATP = 4-methyl-5-(2-phosphooxyethyl)-thiazole + ADP + H(+)</text>
        <dbReference type="Rhea" id="RHEA:24212"/>
        <dbReference type="ChEBI" id="CHEBI:15378"/>
        <dbReference type="ChEBI" id="CHEBI:17957"/>
        <dbReference type="ChEBI" id="CHEBI:30616"/>
        <dbReference type="ChEBI" id="CHEBI:58296"/>
        <dbReference type="ChEBI" id="CHEBI:456216"/>
        <dbReference type="EC" id="2.7.1.50"/>
    </reaction>
</comment>
<comment type="cofactor">
    <cofactor evidence="1">
        <name>Mg(2+)</name>
        <dbReference type="ChEBI" id="CHEBI:18420"/>
    </cofactor>
</comment>
<comment type="pathway">
    <text evidence="1">Cofactor biosynthesis; thiamine diphosphate biosynthesis; 4-methyl-5-(2-phosphoethyl)-thiazole from 5-(2-hydroxyethyl)-4-methylthiazole: step 1/1.</text>
</comment>
<comment type="similarity">
    <text evidence="1">Belongs to the Thz kinase family.</text>
</comment>
<gene>
    <name evidence="1" type="primary">thiM1</name>
    <name type="ordered locus">LEUM_0485</name>
</gene>
<feature type="chain" id="PRO_0000383881" description="Hydroxyethylthiazole kinase 1">
    <location>
        <begin position="1"/>
        <end position="259"/>
    </location>
</feature>
<feature type="binding site" evidence="1">
    <location>
        <position position="38"/>
    </location>
    <ligand>
        <name>substrate</name>
    </ligand>
</feature>
<feature type="binding site" evidence="1">
    <location>
        <position position="113"/>
    </location>
    <ligand>
        <name>ATP</name>
        <dbReference type="ChEBI" id="CHEBI:30616"/>
    </ligand>
</feature>
<feature type="binding site" evidence="1">
    <location>
        <position position="158"/>
    </location>
    <ligand>
        <name>ATP</name>
        <dbReference type="ChEBI" id="CHEBI:30616"/>
    </ligand>
</feature>
<feature type="binding site" evidence="1">
    <location>
        <position position="185"/>
    </location>
    <ligand>
        <name>substrate</name>
    </ligand>
</feature>
<proteinExistence type="inferred from homology"/>
<organism>
    <name type="scientific">Leuconostoc mesenteroides subsp. mesenteroides (strain ATCC 8293 / DSM 20343 / BCRC 11652 / CCM 1803 / JCM 6124 / NCDO 523 / NBRC 100496 / NCIMB 8023 / NCTC 12954 / NRRL B-1118 / 37Y)</name>
    <dbReference type="NCBI Taxonomy" id="203120"/>
    <lineage>
        <taxon>Bacteria</taxon>
        <taxon>Bacillati</taxon>
        <taxon>Bacillota</taxon>
        <taxon>Bacilli</taxon>
        <taxon>Lactobacillales</taxon>
        <taxon>Lactobacillaceae</taxon>
        <taxon>Leuconostoc</taxon>
    </lineage>
</organism>
<dbReference type="EC" id="2.7.1.50" evidence="1"/>
<dbReference type="EMBL" id="CP000414">
    <property type="protein sequence ID" value="ABJ61601.1"/>
    <property type="molecule type" value="Genomic_DNA"/>
</dbReference>
<dbReference type="RefSeq" id="WP_011679325.1">
    <property type="nucleotide sequence ID" value="NC_008531.1"/>
</dbReference>
<dbReference type="SMR" id="Q03YX1"/>
<dbReference type="EnsemblBacteria" id="ABJ61601">
    <property type="protein sequence ID" value="ABJ61601"/>
    <property type="gene ID" value="LEUM_0485"/>
</dbReference>
<dbReference type="GeneID" id="29576455"/>
<dbReference type="KEGG" id="lme:LEUM_0485"/>
<dbReference type="eggNOG" id="COG2145">
    <property type="taxonomic scope" value="Bacteria"/>
</dbReference>
<dbReference type="HOGENOM" id="CLU_019943_0_0_9"/>
<dbReference type="UniPathway" id="UPA00060">
    <property type="reaction ID" value="UER00139"/>
</dbReference>
<dbReference type="Proteomes" id="UP000000362">
    <property type="component" value="Chromosome"/>
</dbReference>
<dbReference type="GO" id="GO:0005524">
    <property type="term" value="F:ATP binding"/>
    <property type="evidence" value="ECO:0007669"/>
    <property type="project" value="UniProtKB-UniRule"/>
</dbReference>
<dbReference type="GO" id="GO:0004417">
    <property type="term" value="F:hydroxyethylthiazole kinase activity"/>
    <property type="evidence" value="ECO:0007669"/>
    <property type="project" value="UniProtKB-UniRule"/>
</dbReference>
<dbReference type="GO" id="GO:0000287">
    <property type="term" value="F:magnesium ion binding"/>
    <property type="evidence" value="ECO:0007669"/>
    <property type="project" value="UniProtKB-UniRule"/>
</dbReference>
<dbReference type="GO" id="GO:0009228">
    <property type="term" value="P:thiamine biosynthetic process"/>
    <property type="evidence" value="ECO:0007669"/>
    <property type="project" value="UniProtKB-KW"/>
</dbReference>
<dbReference type="GO" id="GO:0009229">
    <property type="term" value="P:thiamine diphosphate biosynthetic process"/>
    <property type="evidence" value="ECO:0007669"/>
    <property type="project" value="UniProtKB-UniRule"/>
</dbReference>
<dbReference type="CDD" id="cd01170">
    <property type="entry name" value="THZ_kinase"/>
    <property type="match status" value="1"/>
</dbReference>
<dbReference type="Gene3D" id="3.40.1190.20">
    <property type="match status" value="1"/>
</dbReference>
<dbReference type="HAMAP" id="MF_00228">
    <property type="entry name" value="Thz_kinase"/>
    <property type="match status" value="1"/>
</dbReference>
<dbReference type="InterPro" id="IPR000417">
    <property type="entry name" value="Hyethyz_kinase"/>
</dbReference>
<dbReference type="InterPro" id="IPR029056">
    <property type="entry name" value="Ribokinase-like"/>
</dbReference>
<dbReference type="NCBIfam" id="NF006830">
    <property type="entry name" value="PRK09355.1"/>
    <property type="match status" value="1"/>
</dbReference>
<dbReference type="Pfam" id="PF02110">
    <property type="entry name" value="HK"/>
    <property type="match status" value="1"/>
</dbReference>
<dbReference type="PIRSF" id="PIRSF000513">
    <property type="entry name" value="Thz_kinase"/>
    <property type="match status" value="1"/>
</dbReference>
<dbReference type="PRINTS" id="PR01099">
    <property type="entry name" value="HYETHTZKNASE"/>
</dbReference>
<dbReference type="SUPFAM" id="SSF53613">
    <property type="entry name" value="Ribokinase-like"/>
    <property type="match status" value="1"/>
</dbReference>
<protein>
    <recommendedName>
        <fullName evidence="1">Hydroxyethylthiazole kinase 1</fullName>
        <ecNumber evidence="1">2.7.1.50</ecNumber>
    </recommendedName>
    <alternativeName>
        <fullName evidence="1">4-methyl-5-beta-hydroxyethylthiazole kinase 1</fullName>
        <shortName evidence="1">TH kinase 1</shortName>
        <shortName evidence="1">Thz kinase 1</shortName>
    </alternativeName>
</protein>
<name>THIM1_LEUMM</name>
<sequence>MNITDIRTKSPLVLTYANFVTPQFVANVVNVVGASPLMSRELAEFKELAGIANAVIINTGTLQKVEINDIIKLSQEAYQLGKPVVLDPVAVSVPFRSKAITQFLASGHVDVIRGNAAEIAWFADIDFASQGIDATGKGDVIEIAQRAAKKTGAVIALSGACDVVSDGQYTQTLDINVEQLSSIVGTGDALSSLIGAFIADGLKVPNVMNAMATFKLAGQKAATKTNQPGSFTNQLLDELFVIDNIDVQNFVKESVLNHG</sequence>
<evidence type="ECO:0000255" key="1">
    <source>
        <dbReference type="HAMAP-Rule" id="MF_00228"/>
    </source>
</evidence>
<accession>Q03YX1</accession>
<keyword id="KW-0067">ATP-binding</keyword>
<keyword id="KW-0418">Kinase</keyword>
<keyword id="KW-0460">Magnesium</keyword>
<keyword id="KW-0479">Metal-binding</keyword>
<keyword id="KW-0547">Nucleotide-binding</keyword>
<keyword id="KW-1185">Reference proteome</keyword>
<keyword id="KW-0784">Thiamine biosynthesis</keyword>
<keyword id="KW-0808">Transferase</keyword>